<accession>Q2GIC8</accession>
<evidence type="ECO:0000255" key="1">
    <source>
        <dbReference type="HAMAP-Rule" id="MF_00500"/>
    </source>
</evidence>
<evidence type="ECO:0000305" key="2"/>
<reference key="1">
    <citation type="journal article" date="2006" name="PLoS Genet.">
        <title>Comparative genomics of emerging human ehrlichiosis agents.</title>
        <authorList>
            <person name="Dunning Hotopp J.C."/>
            <person name="Lin M."/>
            <person name="Madupu R."/>
            <person name="Crabtree J."/>
            <person name="Angiuoli S.V."/>
            <person name="Eisen J.A."/>
            <person name="Seshadri R."/>
            <person name="Ren Q."/>
            <person name="Wu M."/>
            <person name="Utterback T.R."/>
            <person name="Smith S."/>
            <person name="Lewis M."/>
            <person name="Khouri H."/>
            <person name="Zhang C."/>
            <person name="Niu H."/>
            <person name="Lin Q."/>
            <person name="Ohashi N."/>
            <person name="Zhi N."/>
            <person name="Nelson W.C."/>
            <person name="Brinkac L.M."/>
            <person name="Dodson R.J."/>
            <person name="Rosovitz M.J."/>
            <person name="Sundaram J.P."/>
            <person name="Daugherty S.C."/>
            <person name="Davidsen T."/>
            <person name="Durkin A.S."/>
            <person name="Gwinn M.L."/>
            <person name="Haft D.H."/>
            <person name="Selengut J.D."/>
            <person name="Sullivan S.A."/>
            <person name="Zafar N."/>
            <person name="Zhou L."/>
            <person name="Benahmed F."/>
            <person name="Forberger H."/>
            <person name="Halpin R."/>
            <person name="Mulligan S."/>
            <person name="Robinson J."/>
            <person name="White O."/>
            <person name="Rikihisa Y."/>
            <person name="Tettelin H."/>
        </authorList>
    </citation>
    <scope>NUCLEOTIDE SEQUENCE [LARGE SCALE GENOMIC DNA]</scope>
    <source>
        <strain>HZ</strain>
    </source>
</reference>
<organism>
    <name type="scientific">Anaplasma phagocytophilum (strain HZ)</name>
    <dbReference type="NCBI Taxonomy" id="212042"/>
    <lineage>
        <taxon>Bacteria</taxon>
        <taxon>Pseudomonadati</taxon>
        <taxon>Pseudomonadota</taxon>
        <taxon>Alphaproteobacteria</taxon>
        <taxon>Rickettsiales</taxon>
        <taxon>Anaplasmataceae</taxon>
        <taxon>Anaplasma</taxon>
        <taxon>phagocytophilum group</taxon>
    </lineage>
</organism>
<dbReference type="EMBL" id="CP000235">
    <property type="protein sequence ID" value="ABD44471.1"/>
    <property type="molecule type" value="Genomic_DNA"/>
</dbReference>
<dbReference type="RefSeq" id="WP_011451379.1">
    <property type="nucleotide sequence ID" value="NC_007797.1"/>
</dbReference>
<dbReference type="SMR" id="Q2GIC8"/>
<dbReference type="STRING" id="212042.APH_1374"/>
<dbReference type="PaxDb" id="212042-APH_1374"/>
<dbReference type="EnsemblBacteria" id="ABD44471">
    <property type="protein sequence ID" value="ABD44471"/>
    <property type="gene ID" value="APH_1374"/>
</dbReference>
<dbReference type="GeneID" id="92747768"/>
<dbReference type="KEGG" id="aph:APH_1374"/>
<dbReference type="eggNOG" id="COG0268">
    <property type="taxonomic scope" value="Bacteria"/>
</dbReference>
<dbReference type="HOGENOM" id="CLU_160655_3_0_5"/>
<dbReference type="Proteomes" id="UP000001943">
    <property type="component" value="Chromosome"/>
</dbReference>
<dbReference type="GO" id="GO:0015935">
    <property type="term" value="C:small ribosomal subunit"/>
    <property type="evidence" value="ECO:0007669"/>
    <property type="project" value="TreeGrafter"/>
</dbReference>
<dbReference type="GO" id="GO:0070181">
    <property type="term" value="F:small ribosomal subunit rRNA binding"/>
    <property type="evidence" value="ECO:0007669"/>
    <property type="project" value="TreeGrafter"/>
</dbReference>
<dbReference type="GO" id="GO:0003735">
    <property type="term" value="F:structural constituent of ribosome"/>
    <property type="evidence" value="ECO:0007669"/>
    <property type="project" value="InterPro"/>
</dbReference>
<dbReference type="GO" id="GO:0006412">
    <property type="term" value="P:translation"/>
    <property type="evidence" value="ECO:0007669"/>
    <property type="project" value="UniProtKB-UniRule"/>
</dbReference>
<dbReference type="Gene3D" id="1.20.58.110">
    <property type="entry name" value="Ribosomal protein S20"/>
    <property type="match status" value="1"/>
</dbReference>
<dbReference type="HAMAP" id="MF_00500">
    <property type="entry name" value="Ribosomal_bS20"/>
    <property type="match status" value="1"/>
</dbReference>
<dbReference type="InterPro" id="IPR002583">
    <property type="entry name" value="Ribosomal_bS20"/>
</dbReference>
<dbReference type="InterPro" id="IPR036510">
    <property type="entry name" value="Ribosomal_bS20_sf"/>
</dbReference>
<dbReference type="NCBIfam" id="TIGR00029">
    <property type="entry name" value="S20"/>
    <property type="match status" value="1"/>
</dbReference>
<dbReference type="PANTHER" id="PTHR33398">
    <property type="entry name" value="30S RIBOSOMAL PROTEIN S20"/>
    <property type="match status" value="1"/>
</dbReference>
<dbReference type="PANTHER" id="PTHR33398:SF1">
    <property type="entry name" value="SMALL RIBOSOMAL SUBUNIT PROTEIN BS20C"/>
    <property type="match status" value="1"/>
</dbReference>
<dbReference type="Pfam" id="PF01649">
    <property type="entry name" value="Ribosomal_S20p"/>
    <property type="match status" value="1"/>
</dbReference>
<dbReference type="SUPFAM" id="SSF46992">
    <property type="entry name" value="Ribosomal protein S20"/>
    <property type="match status" value="1"/>
</dbReference>
<protein>
    <recommendedName>
        <fullName evidence="1">Small ribosomal subunit protein bS20</fullName>
    </recommendedName>
    <alternativeName>
        <fullName evidence="2">30S ribosomal protein S20</fullName>
    </alternativeName>
</protein>
<gene>
    <name evidence="1" type="primary">rpsT</name>
    <name type="ordered locus">APH_1374</name>
</gene>
<keyword id="KW-0687">Ribonucleoprotein</keyword>
<keyword id="KW-0689">Ribosomal protein</keyword>
<keyword id="KW-0694">RNA-binding</keyword>
<keyword id="KW-0699">rRNA-binding</keyword>
<proteinExistence type="inferred from homology"/>
<comment type="function">
    <text evidence="1">Binds directly to 16S ribosomal RNA.</text>
</comment>
<comment type="similarity">
    <text evidence="1">Belongs to the bacterial ribosomal protein bS20 family.</text>
</comment>
<name>RS20_ANAPZ</name>
<feature type="chain" id="PRO_0000236422" description="Small ribosomal subunit protein bS20">
    <location>
        <begin position="1"/>
        <end position="96"/>
    </location>
</feature>
<sequence>MPNHASAKKMVRVIGKRTLSNRVRKSRVRNSVKAFVAALEANSPIEDAIAAFRKAESNIHKCVNKGVFHRNTAARKISALSGKLKAYDLARLQNEQ</sequence>